<keyword id="KW-0046">Antibiotic resistance</keyword>
<keyword id="KW-0067">ATP-binding</keyword>
<keyword id="KW-0963">Cytoplasm</keyword>
<keyword id="KW-0238">DNA-binding</keyword>
<keyword id="KW-0413">Isomerase</keyword>
<keyword id="KW-0460">Magnesium</keyword>
<keyword id="KW-0479">Metal-binding</keyword>
<keyword id="KW-0547">Nucleotide-binding</keyword>
<keyword id="KW-0799">Topoisomerase</keyword>
<reference key="1">
    <citation type="journal article" date="1993" name="Mol. Microbiol.">
        <title>Expression and analysis of two gyrB genes from the novobiocin producer, Streptomyces sphaeroides.</title>
        <authorList>
            <person name="Thiara A.S."/>
            <person name="Cundliffe E."/>
        </authorList>
    </citation>
    <scope>NUCLEOTIDE SEQUENCE [GENOMIC DNA]</scope>
    <source>
        <strain>ATCC 23965 / DSM 40292 / JCM 4252 / NBRC 12917 / NCIMB 11891 / NRRL 2449</strain>
    </source>
</reference>
<comment type="function">
    <text evidence="1">A type II topoisomerase that negatively supercoils closed circular double-stranded (ds) DNA in an ATP-dependent manner to modulate DNA topology and maintain chromosomes in an underwound state. Negative supercoiling favors strand separation, and DNA replication, transcription, recombination and repair, all of which involve strand separation. Also able to catalyze the interconversion of other topological isomers of dsDNA rings, including catenanes and knotted rings. Type II topoisomerases break and join 2 DNA strands simultaneously in an ATP-dependent manner.</text>
</comment>
<comment type="catalytic activity">
    <reaction evidence="1">
        <text>ATP-dependent breakage, passage and rejoining of double-stranded DNA.</text>
        <dbReference type="EC" id="5.6.2.2"/>
    </reaction>
</comment>
<comment type="cofactor">
    <cofactor evidence="1">
        <name>Mg(2+)</name>
        <dbReference type="ChEBI" id="CHEBI:18420"/>
    </cofactor>
    <cofactor evidence="1">
        <name>Mn(2+)</name>
        <dbReference type="ChEBI" id="CHEBI:29035"/>
    </cofactor>
    <cofactor evidence="1">
        <name>Ca(2+)</name>
        <dbReference type="ChEBI" id="CHEBI:29108"/>
    </cofactor>
    <text evidence="1">Binds two Mg(2+) per subunit. The magnesium ions form salt bridges with both the protein and the DNA. Can also accept other divalent metal cations, such as Mn(2+) or Ca(2+).</text>
</comment>
<comment type="subunit">
    <text evidence="1">Heterotetramer, composed of two GyrA and two GyrB chains. In the heterotetramer, GyrA contains the active site tyrosine that forms a transient covalent intermediate with DNA, while GyrB binds cofactors and catalyzes ATP hydrolysis.</text>
</comment>
<comment type="subcellular location">
    <subcellularLocation>
        <location evidence="1">Cytoplasm</location>
    </subcellularLocation>
</comment>
<comment type="miscellaneous">
    <text evidence="3">There are two genes for gyrB in this organism. One which is novobiocin-sensitive (gyrBS) and one which is resistant (gyrBR).</text>
</comment>
<comment type="miscellaneous">
    <text evidence="1">Few gyrases are as efficient as E.coli at forming negative supercoils. Not all organisms have 2 type II topoisomerases; in organisms with a single type II topoisomerase this enzyme also has to decatenate newly replicated chromosomes.</text>
</comment>
<comment type="similarity">
    <text evidence="1">Belongs to the type II topoisomerase GyrB family.</text>
</comment>
<evidence type="ECO:0000255" key="1">
    <source>
        <dbReference type="HAMAP-Rule" id="MF_01898"/>
    </source>
</evidence>
<evidence type="ECO:0000256" key="2">
    <source>
        <dbReference type="SAM" id="MobiDB-lite"/>
    </source>
</evidence>
<evidence type="ECO:0000269" key="3">
    <source>
    </source>
</evidence>
<evidence type="ECO:0000303" key="4">
    <source>
    </source>
</evidence>
<accession>P50075</accession>
<sequence>MADSGNPNENTPSVATGENGEVTGSYNASAITVLEGLDAVRKRPGMYIGSTGERGLHHLVTEVVDNSVDEALAGHADTIDVTILADGGVRVVDNGRGIPVGIVPSEGKPAVEVVLTVLHAGGKFGGGGYSVSGGLHGVGVSVVNALSTKVAVEVKTDGYRWTQDYKLGVPTRRCAQNEATDETGTTVTFWADPDVFETTEYSFETLSRRFQEMAFLNKGLTLKLTDERESAKAVVGADVAGTDSAETPGEEPVRSVTYYYEGGIVDFVKYLNSRKGDLIHPTVIDIDAEDKERMLSVEIAMQWNSQYSEGVYSFANTIHTHEGGTHEEGFRAAMTGLVNRYAREKKFLREKDDNLAGEDIREGLTAIISVKLGEPQFEGQTKTKLGNTEAKTFVQKIVHEHLTDWFDRHPNEAADIIRKSIQAATARVAARKARDLTRRKGLLESASLPGKLSDCQSNDPSKCEIFIVEGDSAGGSAKSGRNPQYQAILPIRGKILNVEKARIDKILQNTEVQALISAFGTGVHEDFDIEKLRYHKIILMADADVDGQHINTLLLTFLFRFMRPLVEAGHVYLSRPPLYKIKWGRDDFEYAYSDRERDALVELGKQNGKRIKEDSIQRFKGLGEMNAEELRITTMDVDHRVLGQVTLDDAAQADDLFSVLMGEDVEARRSFIQRNAKDVRFLDI</sequence>
<organism>
    <name type="scientific">Streptomyces niveus</name>
    <name type="common">Streptomyces spheroides</name>
    <dbReference type="NCBI Taxonomy" id="193462"/>
    <lineage>
        <taxon>Bacteria</taxon>
        <taxon>Bacillati</taxon>
        <taxon>Actinomycetota</taxon>
        <taxon>Actinomycetes</taxon>
        <taxon>Kitasatosporales</taxon>
        <taxon>Streptomycetaceae</taxon>
        <taxon>Streptomyces</taxon>
    </lineage>
</organism>
<feature type="chain" id="PRO_0000145354" description="DNA gyrase subunit B, novobiocin-sensitive">
    <location>
        <begin position="1"/>
        <end position="684"/>
    </location>
</feature>
<feature type="domain" description="Toprim" evidence="1">
    <location>
        <begin position="463"/>
        <end position="577"/>
    </location>
</feature>
<feature type="region of interest" description="Disordered" evidence="2">
    <location>
        <begin position="1"/>
        <end position="22"/>
    </location>
</feature>
<feature type="region of interest" description="Novobiocin-binding">
    <location>
        <begin position="154"/>
        <end position="302"/>
    </location>
</feature>
<feature type="binding site" evidence="1">
    <location>
        <position position="469"/>
    </location>
    <ligand>
        <name>Mg(2+)</name>
        <dbReference type="ChEBI" id="CHEBI:18420"/>
        <label>1</label>
        <note>catalytic</note>
    </ligand>
</feature>
<feature type="binding site" evidence="1">
    <location>
        <position position="542"/>
    </location>
    <ligand>
        <name>Mg(2+)</name>
        <dbReference type="ChEBI" id="CHEBI:18420"/>
        <label>1</label>
        <note>catalytic</note>
    </ligand>
</feature>
<feature type="binding site" evidence="1">
    <location>
        <position position="542"/>
    </location>
    <ligand>
        <name>Mg(2+)</name>
        <dbReference type="ChEBI" id="CHEBI:18420"/>
        <label>2</label>
    </ligand>
</feature>
<feature type="binding site" evidence="1">
    <location>
        <position position="544"/>
    </location>
    <ligand>
        <name>Mg(2+)</name>
        <dbReference type="ChEBI" id="CHEBI:18420"/>
        <label>2</label>
    </ligand>
</feature>
<feature type="site" description="Interaction with DNA" evidence="1">
    <location>
        <position position="494"/>
    </location>
</feature>
<feature type="site" description="Interaction with DNA" evidence="1">
    <location>
        <position position="497"/>
    </location>
</feature>
<name>GYRBS_STRNV</name>
<gene>
    <name evidence="1" type="primary">gyrBS</name>
</gene>
<proteinExistence type="inferred from homology"/>
<dbReference type="EC" id="5.6.2.2" evidence="1"/>
<dbReference type="EMBL" id="Z17305">
    <property type="protein sequence ID" value="CAA78952.1"/>
    <property type="molecule type" value="Genomic_DNA"/>
</dbReference>
<dbReference type="PIR" id="S29683">
    <property type="entry name" value="S29683"/>
</dbReference>
<dbReference type="SMR" id="P50075"/>
<dbReference type="GO" id="GO:0005694">
    <property type="term" value="C:chromosome"/>
    <property type="evidence" value="ECO:0007669"/>
    <property type="project" value="InterPro"/>
</dbReference>
<dbReference type="GO" id="GO:0005737">
    <property type="term" value="C:cytoplasm"/>
    <property type="evidence" value="ECO:0007669"/>
    <property type="project" value="UniProtKB-SubCell"/>
</dbReference>
<dbReference type="GO" id="GO:0005524">
    <property type="term" value="F:ATP binding"/>
    <property type="evidence" value="ECO:0007669"/>
    <property type="project" value="UniProtKB-UniRule"/>
</dbReference>
<dbReference type="GO" id="GO:0003677">
    <property type="term" value="F:DNA binding"/>
    <property type="evidence" value="ECO:0007669"/>
    <property type="project" value="UniProtKB-KW"/>
</dbReference>
<dbReference type="GO" id="GO:0034335">
    <property type="term" value="F:DNA negative supercoiling activity"/>
    <property type="evidence" value="ECO:0007669"/>
    <property type="project" value="UniProtKB-ARBA"/>
</dbReference>
<dbReference type="GO" id="GO:0046872">
    <property type="term" value="F:metal ion binding"/>
    <property type="evidence" value="ECO:0007669"/>
    <property type="project" value="UniProtKB-KW"/>
</dbReference>
<dbReference type="GO" id="GO:0006265">
    <property type="term" value="P:DNA topological change"/>
    <property type="evidence" value="ECO:0007669"/>
    <property type="project" value="UniProtKB-UniRule"/>
</dbReference>
<dbReference type="GO" id="GO:0006261">
    <property type="term" value="P:DNA-templated DNA replication"/>
    <property type="evidence" value="ECO:0007669"/>
    <property type="project" value="UniProtKB-UniRule"/>
</dbReference>
<dbReference type="GO" id="GO:0046677">
    <property type="term" value="P:response to antibiotic"/>
    <property type="evidence" value="ECO:0007669"/>
    <property type="project" value="UniProtKB-KW"/>
</dbReference>
<dbReference type="CDD" id="cd16928">
    <property type="entry name" value="HATPase_GyrB-like"/>
    <property type="match status" value="1"/>
</dbReference>
<dbReference type="CDD" id="cd00822">
    <property type="entry name" value="TopoII_Trans_DNA_gyrase"/>
    <property type="match status" value="1"/>
</dbReference>
<dbReference type="CDD" id="cd03366">
    <property type="entry name" value="TOPRIM_TopoIIA_GyrB"/>
    <property type="match status" value="1"/>
</dbReference>
<dbReference type="FunFam" id="3.30.230.10:FF:000005">
    <property type="entry name" value="DNA gyrase subunit B"/>
    <property type="match status" value="1"/>
</dbReference>
<dbReference type="FunFam" id="3.30.565.10:FF:000002">
    <property type="entry name" value="DNA gyrase subunit B"/>
    <property type="match status" value="1"/>
</dbReference>
<dbReference type="FunFam" id="3.40.50.670:FF:000002">
    <property type="entry name" value="DNA gyrase subunit B"/>
    <property type="match status" value="1"/>
</dbReference>
<dbReference type="Gene3D" id="3.30.230.10">
    <property type="match status" value="1"/>
</dbReference>
<dbReference type="Gene3D" id="3.40.50.670">
    <property type="match status" value="1"/>
</dbReference>
<dbReference type="Gene3D" id="3.30.565.10">
    <property type="entry name" value="Histidine kinase-like ATPase, C-terminal domain"/>
    <property type="match status" value="1"/>
</dbReference>
<dbReference type="HAMAP" id="MF_01898">
    <property type="entry name" value="GyrB"/>
    <property type="match status" value="1"/>
</dbReference>
<dbReference type="InterPro" id="IPR002288">
    <property type="entry name" value="DNA_gyrase_B_C"/>
</dbReference>
<dbReference type="InterPro" id="IPR011557">
    <property type="entry name" value="GyrB"/>
</dbReference>
<dbReference type="InterPro" id="IPR036890">
    <property type="entry name" value="HATPase_C_sf"/>
</dbReference>
<dbReference type="InterPro" id="IPR020568">
    <property type="entry name" value="Ribosomal_Su5_D2-typ_SF"/>
</dbReference>
<dbReference type="InterPro" id="IPR014721">
    <property type="entry name" value="Ribsml_uS5_D2-typ_fold_subgr"/>
</dbReference>
<dbReference type="InterPro" id="IPR001241">
    <property type="entry name" value="Topo_IIA"/>
</dbReference>
<dbReference type="InterPro" id="IPR013760">
    <property type="entry name" value="Topo_IIA-like_dom_sf"/>
</dbReference>
<dbReference type="InterPro" id="IPR000565">
    <property type="entry name" value="Topo_IIA_B"/>
</dbReference>
<dbReference type="InterPro" id="IPR013759">
    <property type="entry name" value="Topo_IIA_B_C"/>
</dbReference>
<dbReference type="InterPro" id="IPR013506">
    <property type="entry name" value="Topo_IIA_bsu_dom2"/>
</dbReference>
<dbReference type="InterPro" id="IPR018522">
    <property type="entry name" value="TopoIIA_CS"/>
</dbReference>
<dbReference type="InterPro" id="IPR006171">
    <property type="entry name" value="TOPRIM_dom"/>
</dbReference>
<dbReference type="InterPro" id="IPR034160">
    <property type="entry name" value="TOPRIM_GyrB"/>
</dbReference>
<dbReference type="NCBIfam" id="TIGR01059">
    <property type="entry name" value="gyrB"/>
    <property type="match status" value="1"/>
</dbReference>
<dbReference type="NCBIfam" id="NF004189">
    <property type="entry name" value="PRK05644.1"/>
    <property type="match status" value="1"/>
</dbReference>
<dbReference type="NCBIfam" id="NF011501">
    <property type="entry name" value="PRK14939.1"/>
    <property type="match status" value="1"/>
</dbReference>
<dbReference type="PANTHER" id="PTHR45866:SF1">
    <property type="entry name" value="DNA GYRASE SUBUNIT B, MITOCHONDRIAL"/>
    <property type="match status" value="1"/>
</dbReference>
<dbReference type="PANTHER" id="PTHR45866">
    <property type="entry name" value="DNA GYRASE/TOPOISOMERASE SUBUNIT B"/>
    <property type="match status" value="1"/>
</dbReference>
<dbReference type="Pfam" id="PF00204">
    <property type="entry name" value="DNA_gyraseB"/>
    <property type="match status" value="1"/>
</dbReference>
<dbReference type="Pfam" id="PF00986">
    <property type="entry name" value="DNA_gyraseB_C"/>
    <property type="match status" value="1"/>
</dbReference>
<dbReference type="Pfam" id="PF02518">
    <property type="entry name" value="HATPase_c"/>
    <property type="match status" value="1"/>
</dbReference>
<dbReference type="Pfam" id="PF01751">
    <property type="entry name" value="Toprim"/>
    <property type="match status" value="1"/>
</dbReference>
<dbReference type="PRINTS" id="PR01159">
    <property type="entry name" value="DNAGYRASEB"/>
</dbReference>
<dbReference type="PRINTS" id="PR00418">
    <property type="entry name" value="TPI2FAMILY"/>
</dbReference>
<dbReference type="SMART" id="SM00387">
    <property type="entry name" value="HATPase_c"/>
    <property type="match status" value="1"/>
</dbReference>
<dbReference type="SMART" id="SM00433">
    <property type="entry name" value="TOP2c"/>
    <property type="match status" value="1"/>
</dbReference>
<dbReference type="SUPFAM" id="SSF55874">
    <property type="entry name" value="ATPase domain of HSP90 chaperone/DNA topoisomerase II/histidine kinase"/>
    <property type="match status" value="1"/>
</dbReference>
<dbReference type="SUPFAM" id="SSF54211">
    <property type="entry name" value="Ribosomal protein S5 domain 2-like"/>
    <property type="match status" value="1"/>
</dbReference>
<dbReference type="SUPFAM" id="SSF56719">
    <property type="entry name" value="Type II DNA topoisomerase"/>
    <property type="match status" value="1"/>
</dbReference>
<dbReference type="PROSITE" id="PS00177">
    <property type="entry name" value="TOPOISOMERASE_II"/>
    <property type="match status" value="1"/>
</dbReference>
<dbReference type="PROSITE" id="PS50880">
    <property type="entry name" value="TOPRIM"/>
    <property type="match status" value="1"/>
</dbReference>
<protein>
    <recommendedName>
        <fullName evidence="1 4">DNA gyrase subunit B, novobiocin-sensitive</fullName>
        <ecNumber evidence="1">5.6.2.2</ecNumber>
    </recommendedName>
</protein>